<sequence>MAKKVTGIIKLQVAAGAANPSPPVGPALGQKGVNIMEFCKAFNAKTGDMEKGSPVPVEITVYEDRSFTFETKTSPASYMLKKAAGIKSGSGRPNTEKVGKVTLAQLEEIAKAKEPDLTAADLEAAVRTIAGSARSMGLVVEG</sequence>
<dbReference type="EMBL" id="CP000388">
    <property type="protein sequence ID" value="ABG39123.1"/>
    <property type="molecule type" value="Genomic_DNA"/>
</dbReference>
<dbReference type="RefSeq" id="WP_006992803.1">
    <property type="nucleotide sequence ID" value="NC_008228.1"/>
</dbReference>
<dbReference type="SMR" id="Q15YB5"/>
<dbReference type="STRING" id="342610.Patl_0594"/>
<dbReference type="KEGG" id="pat:Patl_0594"/>
<dbReference type="eggNOG" id="COG0080">
    <property type="taxonomic scope" value="Bacteria"/>
</dbReference>
<dbReference type="HOGENOM" id="CLU_074237_2_0_6"/>
<dbReference type="OrthoDB" id="9802408at2"/>
<dbReference type="Proteomes" id="UP000001981">
    <property type="component" value="Chromosome"/>
</dbReference>
<dbReference type="GO" id="GO:0022625">
    <property type="term" value="C:cytosolic large ribosomal subunit"/>
    <property type="evidence" value="ECO:0007669"/>
    <property type="project" value="TreeGrafter"/>
</dbReference>
<dbReference type="GO" id="GO:0070180">
    <property type="term" value="F:large ribosomal subunit rRNA binding"/>
    <property type="evidence" value="ECO:0007669"/>
    <property type="project" value="UniProtKB-UniRule"/>
</dbReference>
<dbReference type="GO" id="GO:0003735">
    <property type="term" value="F:structural constituent of ribosome"/>
    <property type="evidence" value="ECO:0007669"/>
    <property type="project" value="InterPro"/>
</dbReference>
<dbReference type="GO" id="GO:0006412">
    <property type="term" value="P:translation"/>
    <property type="evidence" value="ECO:0007669"/>
    <property type="project" value="UniProtKB-UniRule"/>
</dbReference>
<dbReference type="CDD" id="cd00349">
    <property type="entry name" value="Ribosomal_L11"/>
    <property type="match status" value="1"/>
</dbReference>
<dbReference type="FunFam" id="1.10.10.250:FF:000001">
    <property type="entry name" value="50S ribosomal protein L11"/>
    <property type="match status" value="1"/>
</dbReference>
<dbReference type="FunFam" id="3.30.1550.10:FF:000001">
    <property type="entry name" value="50S ribosomal protein L11"/>
    <property type="match status" value="1"/>
</dbReference>
<dbReference type="Gene3D" id="1.10.10.250">
    <property type="entry name" value="Ribosomal protein L11, C-terminal domain"/>
    <property type="match status" value="1"/>
</dbReference>
<dbReference type="Gene3D" id="3.30.1550.10">
    <property type="entry name" value="Ribosomal protein L11/L12, N-terminal domain"/>
    <property type="match status" value="1"/>
</dbReference>
<dbReference type="HAMAP" id="MF_00736">
    <property type="entry name" value="Ribosomal_uL11"/>
    <property type="match status" value="1"/>
</dbReference>
<dbReference type="InterPro" id="IPR000911">
    <property type="entry name" value="Ribosomal_uL11"/>
</dbReference>
<dbReference type="InterPro" id="IPR006519">
    <property type="entry name" value="Ribosomal_uL11_bac-typ"/>
</dbReference>
<dbReference type="InterPro" id="IPR020783">
    <property type="entry name" value="Ribosomal_uL11_C"/>
</dbReference>
<dbReference type="InterPro" id="IPR036769">
    <property type="entry name" value="Ribosomal_uL11_C_sf"/>
</dbReference>
<dbReference type="InterPro" id="IPR020785">
    <property type="entry name" value="Ribosomal_uL11_CS"/>
</dbReference>
<dbReference type="InterPro" id="IPR020784">
    <property type="entry name" value="Ribosomal_uL11_N"/>
</dbReference>
<dbReference type="InterPro" id="IPR036796">
    <property type="entry name" value="Ribosomal_uL11_N_sf"/>
</dbReference>
<dbReference type="NCBIfam" id="TIGR01632">
    <property type="entry name" value="L11_bact"/>
    <property type="match status" value="1"/>
</dbReference>
<dbReference type="PANTHER" id="PTHR11661">
    <property type="entry name" value="60S RIBOSOMAL PROTEIN L12"/>
    <property type="match status" value="1"/>
</dbReference>
<dbReference type="PANTHER" id="PTHR11661:SF1">
    <property type="entry name" value="LARGE RIBOSOMAL SUBUNIT PROTEIN UL11M"/>
    <property type="match status" value="1"/>
</dbReference>
<dbReference type="Pfam" id="PF00298">
    <property type="entry name" value="Ribosomal_L11"/>
    <property type="match status" value="1"/>
</dbReference>
<dbReference type="Pfam" id="PF03946">
    <property type="entry name" value="Ribosomal_L11_N"/>
    <property type="match status" value="1"/>
</dbReference>
<dbReference type="SMART" id="SM00649">
    <property type="entry name" value="RL11"/>
    <property type="match status" value="1"/>
</dbReference>
<dbReference type="SUPFAM" id="SSF54747">
    <property type="entry name" value="Ribosomal L11/L12e N-terminal domain"/>
    <property type="match status" value="1"/>
</dbReference>
<dbReference type="SUPFAM" id="SSF46906">
    <property type="entry name" value="Ribosomal protein L11, C-terminal domain"/>
    <property type="match status" value="1"/>
</dbReference>
<dbReference type="PROSITE" id="PS00359">
    <property type="entry name" value="RIBOSOMAL_L11"/>
    <property type="match status" value="1"/>
</dbReference>
<organism>
    <name type="scientific">Pseudoalteromonas atlantica (strain T6c / ATCC BAA-1087)</name>
    <dbReference type="NCBI Taxonomy" id="3042615"/>
    <lineage>
        <taxon>Bacteria</taxon>
        <taxon>Pseudomonadati</taxon>
        <taxon>Pseudomonadota</taxon>
        <taxon>Gammaproteobacteria</taxon>
        <taxon>Alteromonadales</taxon>
        <taxon>Alteromonadaceae</taxon>
        <taxon>Paraglaciecola</taxon>
    </lineage>
</organism>
<feature type="chain" id="PRO_1000046241" description="Large ribosomal subunit protein uL11">
    <location>
        <begin position="1"/>
        <end position="142"/>
    </location>
</feature>
<keyword id="KW-0488">Methylation</keyword>
<keyword id="KW-0687">Ribonucleoprotein</keyword>
<keyword id="KW-0689">Ribosomal protein</keyword>
<keyword id="KW-0694">RNA-binding</keyword>
<keyword id="KW-0699">rRNA-binding</keyword>
<comment type="function">
    <text evidence="1">Forms part of the ribosomal stalk which helps the ribosome interact with GTP-bound translation factors.</text>
</comment>
<comment type="subunit">
    <text evidence="1">Part of the ribosomal stalk of the 50S ribosomal subunit. Interacts with L10 and the large rRNA to form the base of the stalk. L10 forms an elongated spine to which L12 dimers bind in a sequential fashion forming a multimeric L10(L12)X complex.</text>
</comment>
<comment type="PTM">
    <text evidence="1">One or more lysine residues are methylated.</text>
</comment>
<comment type="similarity">
    <text evidence="1">Belongs to the universal ribosomal protein uL11 family.</text>
</comment>
<reference key="1">
    <citation type="submission" date="2006-06" db="EMBL/GenBank/DDBJ databases">
        <title>Complete sequence of Pseudoalteromonas atlantica T6c.</title>
        <authorList>
            <consortium name="US DOE Joint Genome Institute"/>
            <person name="Copeland A."/>
            <person name="Lucas S."/>
            <person name="Lapidus A."/>
            <person name="Barry K."/>
            <person name="Detter J.C."/>
            <person name="Glavina del Rio T."/>
            <person name="Hammon N."/>
            <person name="Israni S."/>
            <person name="Dalin E."/>
            <person name="Tice H."/>
            <person name="Pitluck S."/>
            <person name="Saunders E."/>
            <person name="Brettin T."/>
            <person name="Bruce D."/>
            <person name="Han C."/>
            <person name="Tapia R."/>
            <person name="Gilna P."/>
            <person name="Schmutz J."/>
            <person name="Larimer F."/>
            <person name="Land M."/>
            <person name="Hauser L."/>
            <person name="Kyrpides N."/>
            <person name="Kim E."/>
            <person name="Karls A.C."/>
            <person name="Bartlett D."/>
            <person name="Higgins B.P."/>
            <person name="Richardson P."/>
        </authorList>
    </citation>
    <scope>NUCLEOTIDE SEQUENCE [LARGE SCALE GENOMIC DNA]</scope>
    <source>
        <strain>T6c / ATCC BAA-1087</strain>
    </source>
</reference>
<evidence type="ECO:0000255" key="1">
    <source>
        <dbReference type="HAMAP-Rule" id="MF_00736"/>
    </source>
</evidence>
<evidence type="ECO:0000305" key="2"/>
<name>RL11_PSEA6</name>
<protein>
    <recommendedName>
        <fullName evidence="1">Large ribosomal subunit protein uL11</fullName>
    </recommendedName>
    <alternativeName>
        <fullName evidence="2">50S ribosomal protein L11</fullName>
    </alternativeName>
</protein>
<proteinExistence type="inferred from homology"/>
<gene>
    <name evidence="1" type="primary">rplK</name>
    <name type="ordered locus">Patl_0594</name>
</gene>
<accession>Q15YB5</accession>